<comment type="function">
    <text evidence="1">Minor structural protein that acts as an endoribonuclease during lytic infection. Degrades host mRNAs in the cytoplasm by cutting them at preferred sites, including some in regions of translation initiation (By similarity).</text>
</comment>
<comment type="subcellular location">
    <subcellularLocation>
        <location evidence="3">Virion</location>
    </subcellularLocation>
</comment>
<comment type="similarity">
    <text evidence="3">Belongs to the herpesviridae VHS protein family.</text>
</comment>
<accession>Q6UDJ0</accession>
<evidence type="ECO:0000250" key="1"/>
<evidence type="ECO:0000256" key="2">
    <source>
        <dbReference type="SAM" id="MobiDB-lite"/>
    </source>
</evidence>
<evidence type="ECO:0000305" key="3"/>
<dbReference type="EC" id="3.1.27.-"/>
<dbReference type="EMBL" id="AY372243">
    <property type="protein sequence ID" value="AAQ73720.1"/>
    <property type="molecule type" value="Genomic_DNA"/>
</dbReference>
<dbReference type="RefSeq" id="NP_944414.1">
    <property type="nucleotide sequence ID" value="NC_005264.1"/>
</dbReference>
<dbReference type="GeneID" id="2656984"/>
<dbReference type="KEGG" id="vg:2656984"/>
<dbReference type="Proteomes" id="UP000006840">
    <property type="component" value="Segment"/>
</dbReference>
<dbReference type="GO" id="GO:0044423">
    <property type="term" value="C:virion component"/>
    <property type="evidence" value="ECO:0007669"/>
    <property type="project" value="UniProtKB-KW"/>
</dbReference>
<dbReference type="GO" id="GO:0004519">
    <property type="term" value="F:endonuclease activity"/>
    <property type="evidence" value="ECO:0007669"/>
    <property type="project" value="UniProtKB-KW"/>
</dbReference>
<dbReference type="GO" id="GO:0003723">
    <property type="term" value="F:RNA binding"/>
    <property type="evidence" value="ECO:0007669"/>
    <property type="project" value="UniProtKB-KW"/>
</dbReference>
<dbReference type="GO" id="GO:0039595">
    <property type="term" value="P:symbiont-mediated degradation of host mRNA"/>
    <property type="evidence" value="ECO:0007669"/>
    <property type="project" value="UniProtKB-KW"/>
</dbReference>
<dbReference type="GO" id="GO:0039657">
    <property type="term" value="P:symbiont-mediated suppression of host gene expression"/>
    <property type="evidence" value="ECO:0007669"/>
    <property type="project" value="UniProtKB-KW"/>
</dbReference>
<dbReference type="Gene3D" id="3.40.50.1010">
    <property type="entry name" value="5'-nuclease"/>
    <property type="match status" value="1"/>
</dbReference>
<dbReference type="InterPro" id="IPR029060">
    <property type="entry name" value="PIN-like_dom_sf"/>
</dbReference>
<dbReference type="SUPFAM" id="SSF88723">
    <property type="entry name" value="PIN domain-like"/>
    <property type="match status" value="1"/>
</dbReference>
<keyword id="KW-1132">Decay of host mRNAs by virus</keyword>
<keyword id="KW-0255">Endonuclease</keyword>
<keyword id="KW-1262">Eukaryotic host gene expression shutoff by virus</keyword>
<keyword id="KW-1190">Host gene expression shutoff by virus</keyword>
<keyword id="KW-1192">Host mRNA suppression by virus</keyword>
<keyword id="KW-0945">Host-virus interaction</keyword>
<keyword id="KW-0378">Hydrolase</keyword>
<keyword id="KW-0540">Nuclease</keyword>
<keyword id="KW-1185">Reference proteome</keyword>
<keyword id="KW-0694">RNA-binding</keyword>
<keyword id="KW-0946">Virion</keyword>
<feature type="chain" id="PRO_0000406830" description="Virion host shutoff protein">
    <location>
        <begin position="1"/>
        <end position="440"/>
    </location>
</feature>
<feature type="region of interest" description="Disordered" evidence="2">
    <location>
        <begin position="98"/>
        <end position="144"/>
    </location>
</feature>
<feature type="region of interest" description="Disordered" evidence="2">
    <location>
        <begin position="265"/>
        <end position="312"/>
    </location>
</feature>
<feature type="compositionally biased region" description="Low complexity" evidence="2">
    <location>
        <begin position="266"/>
        <end position="281"/>
    </location>
</feature>
<organismHost>
    <name type="scientific">Amazona oratrix</name>
    <name type="common">yellow-headed parrot</name>
    <dbReference type="NCBI Taxonomy" id="152276"/>
</organismHost>
<protein>
    <recommendedName>
        <fullName>Virion host shutoff protein</fullName>
        <shortName>Vhs</shortName>
        <ecNumber>3.1.27.-</ecNumber>
    </recommendedName>
</protein>
<organism>
    <name type="scientific">Psittacid herpesvirus 1 (isolate Amazon parrot/-/97-0001/1997)</name>
    <name type="common">PsHV-1</name>
    <name type="synonym">Pacheco's disease virus</name>
    <dbReference type="NCBI Taxonomy" id="670426"/>
    <lineage>
        <taxon>Viruses</taxon>
        <taxon>Duplodnaviria</taxon>
        <taxon>Heunggongvirae</taxon>
        <taxon>Peploviricota</taxon>
        <taxon>Herviviricetes</taxon>
        <taxon>Herpesvirales</taxon>
        <taxon>Orthoherpesviridae</taxon>
        <taxon>Alphaherpesvirinae</taxon>
        <taxon>Iltovirus</taxon>
        <taxon>Iltovirus psittacidalpha1</taxon>
        <taxon>Psittacid alphaherpesvirus 1</taxon>
    </lineage>
</organism>
<reference key="1">
    <citation type="journal article" date="2006" name="J. Virol.">
        <title>Psittacid herpesvirus 1 and infectious laryngotracheitis virus: Comparative genome sequence analysis of two avian alphaherpesviruses.</title>
        <authorList>
            <person name="Thureen D.R."/>
            <person name="Keeler C.L. Jr."/>
        </authorList>
    </citation>
    <scope>NUCLEOTIDE SEQUENCE [LARGE SCALE GENOMIC DNA]</scope>
</reference>
<gene>
    <name type="primary">UL41</name>
</gene>
<proteinExistence type="inferred from homology"/>
<name>SHUT_PSHV1</name>
<sequence length="440" mass="49502">MGILGMRRFIREHELSVHLSIQMERGLYIPIAVDTWNVLTPIMRRLDPGNMMDPVERTLRGIMQVFSLLNKKSCFPIFVLDGGRKRAFKGPVKHDYHNIDHRAPTDGDDLEASANENQPHSLAGNAPRLASGARGAHQSSRRKTALRATPHYKLCWDLITASGFPTVYVKGMEADYGCANLFHTKTVMYVWSSDSDMVFMGCDVITDLTPAFPVAVFSKHVLEYLNMTQREFANTFVDCHTNLHSPETIYSFAAKLLEHRCGSAIDEPPAASEESSASDQQSADEDEHGAWSRYTRRPPRRADAAAWGAGPGGNGQLKGVSVLCGFPSDARPFDCAPARRRRLPQRREEPAARLKKNREFLAYMNSFIGCKVINNRHTLIKRVPIRQETFDPVEIYRILHEYAPTMANKWCAEMLVKCKLKPVPPLRDVAYGKATQINLC</sequence>